<proteinExistence type="evidence at protein level"/>
<keyword id="KW-0053">Apoptosis</keyword>
<keyword id="KW-0963">Cytoplasm</keyword>
<keyword id="KW-1017">Isopeptide bond</keyword>
<keyword id="KW-0539">Nucleus</keyword>
<keyword id="KW-0597">Phosphoprotein</keyword>
<keyword id="KW-1185">Reference proteome</keyword>
<keyword id="KW-0804">Transcription</keyword>
<keyword id="KW-0805">Transcription regulation</keyword>
<keyword id="KW-0832">Ubl conjugation</keyword>
<reference key="1">
    <citation type="journal article" date="2004" name="Genome Res.">
        <title>The status, quality, and expansion of the NIH full-length cDNA project: the Mammalian Gene Collection (MGC).</title>
        <authorList>
            <consortium name="The MGC Project Team"/>
        </authorList>
    </citation>
    <scope>NUCLEOTIDE SEQUENCE [LARGE SCALE MRNA]</scope>
    <source>
        <tissue>Thymus</tissue>
    </source>
</reference>
<reference key="2">
    <citation type="journal article" date="2001" name="J. Biol. Chem.">
        <title>A novel c-Myc-responsive gene, JPO1, participates in neoplastic transformation.</title>
        <authorList>
            <person name="Prescott J.E."/>
            <person name="Osthus R.C."/>
            <person name="Lee L.A."/>
            <person name="Lewis B.C."/>
            <person name="Shim H."/>
            <person name="Barrett J.F."/>
            <person name="Guo Q."/>
            <person name="Hawkins A.L."/>
            <person name="Griffin C.A."/>
            <person name="Dang C.V."/>
        </authorList>
    </citation>
    <scope>FUNCTION</scope>
</reference>
<reference key="3">
    <citation type="journal article" date="2012" name="Nat. Commun.">
        <title>Quantitative maps of protein phosphorylation sites across 14 different rat organs and tissues.</title>
        <authorList>
            <person name="Lundby A."/>
            <person name="Secher A."/>
            <person name="Lage K."/>
            <person name="Nordsborg N.B."/>
            <person name="Dmytriyev A."/>
            <person name="Lundby C."/>
            <person name="Olsen J.V."/>
        </authorList>
    </citation>
    <scope>PHOSPHORYLATION [LARGE SCALE ANALYSIS] AT SER-193 AND SER-220</scope>
    <scope>IDENTIFICATION BY MASS SPECTROMETRY [LARGE SCALE ANALYSIS]</scope>
</reference>
<evidence type="ECO:0000250" key="1"/>
<evidence type="ECO:0000250" key="2">
    <source>
        <dbReference type="UniProtKB" id="Q9BWT1"/>
    </source>
</evidence>
<evidence type="ECO:0000250" key="3">
    <source>
        <dbReference type="UniProtKB" id="Q9D0M2"/>
    </source>
</evidence>
<evidence type="ECO:0000256" key="4">
    <source>
        <dbReference type="SAM" id="MobiDB-lite"/>
    </source>
</evidence>
<evidence type="ECO:0000269" key="5">
    <source>
    </source>
</evidence>
<evidence type="ECO:0007744" key="6">
    <source>
    </source>
</evidence>
<organism>
    <name type="scientific">Rattus norvegicus</name>
    <name type="common">Rat</name>
    <dbReference type="NCBI Taxonomy" id="10116"/>
    <lineage>
        <taxon>Eukaryota</taxon>
        <taxon>Metazoa</taxon>
        <taxon>Chordata</taxon>
        <taxon>Craniata</taxon>
        <taxon>Vertebrata</taxon>
        <taxon>Euteleostomi</taxon>
        <taxon>Mammalia</taxon>
        <taxon>Eutheria</taxon>
        <taxon>Euarchontoglires</taxon>
        <taxon>Glires</taxon>
        <taxon>Rodentia</taxon>
        <taxon>Myomorpha</taxon>
        <taxon>Muroidea</taxon>
        <taxon>Muridae</taxon>
        <taxon>Murinae</taxon>
        <taxon>Rattus</taxon>
    </lineage>
</organism>
<gene>
    <name type="primary">Cdca7</name>
</gene>
<name>CDCA7_RAT</name>
<dbReference type="EMBL" id="BC098690">
    <property type="protein sequence ID" value="AAH98690.1"/>
    <property type="molecule type" value="mRNA"/>
</dbReference>
<dbReference type="RefSeq" id="NP_001020864.1">
    <property type="nucleotide sequence ID" value="NM_001025693.1"/>
</dbReference>
<dbReference type="SMR" id="Q4KM91"/>
<dbReference type="FunCoup" id="Q4KM91">
    <property type="interactions" value="693"/>
</dbReference>
<dbReference type="STRING" id="10116.ENSRNOP00000002066"/>
<dbReference type="iPTMnet" id="Q4KM91"/>
<dbReference type="PhosphoSitePlus" id="Q4KM91"/>
<dbReference type="PaxDb" id="10116-ENSRNOP00000002066"/>
<dbReference type="GeneID" id="311742"/>
<dbReference type="KEGG" id="rno:311742"/>
<dbReference type="UCSC" id="RGD:1309363">
    <property type="organism name" value="rat"/>
</dbReference>
<dbReference type="AGR" id="RGD:1309363"/>
<dbReference type="CTD" id="83879"/>
<dbReference type="RGD" id="1309363">
    <property type="gene designation" value="Cdca7"/>
</dbReference>
<dbReference type="VEuPathDB" id="HostDB:ENSRNOG00000001514"/>
<dbReference type="eggNOG" id="ENOG502QQPE">
    <property type="taxonomic scope" value="Eukaryota"/>
</dbReference>
<dbReference type="HOGENOM" id="CLU_035988_2_0_1"/>
<dbReference type="InParanoid" id="Q4KM91"/>
<dbReference type="OrthoDB" id="298344at2759"/>
<dbReference type="PhylomeDB" id="Q4KM91"/>
<dbReference type="TreeFam" id="TF101076"/>
<dbReference type="PRO" id="PR:Q4KM91"/>
<dbReference type="Proteomes" id="UP000002494">
    <property type="component" value="Chromosome 3"/>
</dbReference>
<dbReference type="Bgee" id="ENSRNOG00000001514">
    <property type="expression patterns" value="Expressed in thymus and 19 other cell types or tissues"/>
</dbReference>
<dbReference type="GO" id="GO:0005737">
    <property type="term" value="C:cytoplasm"/>
    <property type="evidence" value="ECO:0007669"/>
    <property type="project" value="UniProtKB-SubCell"/>
</dbReference>
<dbReference type="GO" id="GO:0005634">
    <property type="term" value="C:nucleus"/>
    <property type="evidence" value="ECO:0000266"/>
    <property type="project" value="RGD"/>
</dbReference>
<dbReference type="GO" id="GO:0006915">
    <property type="term" value="P:apoptotic process"/>
    <property type="evidence" value="ECO:0007669"/>
    <property type="project" value="UniProtKB-KW"/>
</dbReference>
<dbReference type="GO" id="GO:0042127">
    <property type="term" value="P:regulation of cell population proliferation"/>
    <property type="evidence" value="ECO:0000266"/>
    <property type="project" value="RGD"/>
</dbReference>
<dbReference type="GO" id="GO:0006355">
    <property type="term" value="P:regulation of DNA-templated transcription"/>
    <property type="evidence" value="ECO:0007669"/>
    <property type="project" value="InterPro"/>
</dbReference>
<dbReference type="InterPro" id="IPR040221">
    <property type="entry name" value="CDCA7/CDA7L"/>
</dbReference>
<dbReference type="InterPro" id="IPR018866">
    <property type="entry name" value="Znf-4CXXC_R1"/>
</dbReference>
<dbReference type="PANTHER" id="PTHR31169:SF2">
    <property type="entry name" value="CELL DIVISION CYCLE-ASSOCIATED PROTEIN 7"/>
    <property type="match status" value="1"/>
</dbReference>
<dbReference type="PANTHER" id="PTHR31169">
    <property type="entry name" value="OS05G0300700 PROTEIN"/>
    <property type="match status" value="1"/>
</dbReference>
<dbReference type="Pfam" id="PF10497">
    <property type="entry name" value="zf-4CXXC_R1"/>
    <property type="match status" value="1"/>
</dbReference>
<comment type="function">
    <text evidence="1 5">Participates in MYC-mediated cell transformation and apoptosis; induces anchorage-independent growth and clonogenicity in lymphoblastoid cells. Insufficient to induce tumorigenicity when overexpressed but contributes to MYC-mediated tumorigenesis. May play a role as transcriptional regulator (By similarity).</text>
</comment>
<comment type="subunit">
    <text evidence="1">Interacts with MYC (via C-terminus), YWHAE and YWHAZ.</text>
</comment>
<comment type="subcellular location">
    <subcellularLocation>
        <location evidence="1">Nucleus</location>
    </subcellularLocation>
    <subcellularLocation>
        <location evidence="1">Cytoplasm</location>
    </subcellularLocation>
    <text evidence="1">Predominantly nuclear with some expression also seen in the cytoplasm. Predominantly cytoplasmic when phosphorylated at Thr-166 (By similarity).</text>
</comment>
<comment type="PTM">
    <text evidence="1">Phosphorylation at Thr-166 promotes interaction with YWHAE and YWHAZ, dissociation from MYC and sequestration in the cytoplasm.</text>
</comment>
<comment type="miscellaneous">
    <text>Cdca7 expression is correlated with MYC expression in fibroblasts and is much higher in attached cells tham in non-attached cells.</text>
</comment>
<accession>Q4KM91</accession>
<protein>
    <recommendedName>
        <fullName>Cell division cycle-associated protein 7</fullName>
    </recommendedName>
</protein>
<sequence length="377" mass="43024">MEARRARQKALKVKNLKNVRYMKLISVETSSSSDDSCDSFASDNFANTRLQFNREGCRTRSQCRPSGPLRVAMKFPARNTRRAANTKAAPPKPSESSANDSHSESDSEEEEDGMNFLEKRALNIKQNKAMLAKLMSELESFPGIFSGRHSLPGHRTKDSKSPRRRTFPGVASRRNPERRARPLTRSRSRILGSLGALPTEEEEDEEEEEDKYMLVRRRKSVDGYMNDDDVSRSRRPGSMTLPHIIRPVEDVTEEEIRNICSNSREKIYNRSLGSTCHQCRQKTTDTKTNCRNPDCWGIRGQFCGPCLRNRYGEEVKDALLDPNWHCPPCRGICNCSFCRQRDGRCATGVLVYLAKYHGFGNVHAYLKSLKQEFEMQA</sequence>
<feature type="chain" id="PRO_0000249312" description="Cell division cycle-associated protein 7">
    <location>
        <begin position="1"/>
        <end position="377"/>
    </location>
</feature>
<feature type="region of interest" description="Disordered" evidence="4">
    <location>
        <begin position="58"/>
        <end position="113"/>
    </location>
</feature>
<feature type="region of interest" description="Disordered" evidence="4">
    <location>
        <begin position="144"/>
        <end position="211"/>
    </location>
</feature>
<feature type="region of interest" description="Interaction with MYC" evidence="1">
    <location>
        <begin position="148"/>
        <end position="173"/>
    </location>
</feature>
<feature type="region of interest" description="Mediates transcriptional activity" evidence="1">
    <location>
        <begin position="253"/>
        <end position="377"/>
    </location>
</feature>
<feature type="short sequence motif" description="Nuclear localization signal" evidence="1">
    <location>
        <begin position="163"/>
        <end position="179"/>
    </location>
</feature>
<feature type="compositionally biased region" description="Low complexity" evidence="4">
    <location>
        <begin position="76"/>
        <end position="100"/>
    </location>
</feature>
<feature type="compositionally biased region" description="Acidic residues" evidence="4">
    <location>
        <begin position="199"/>
        <end position="210"/>
    </location>
</feature>
<feature type="modified residue" description="Phosphothreonine" evidence="2">
    <location>
        <position position="166"/>
    </location>
</feature>
<feature type="modified residue" description="Phosphoserine" evidence="6">
    <location>
        <position position="193"/>
    </location>
</feature>
<feature type="modified residue" description="Phosphothreonine" evidence="3">
    <location>
        <position position="199"/>
    </location>
</feature>
<feature type="modified residue" description="Phosphoserine" evidence="6">
    <location>
        <position position="220"/>
    </location>
</feature>
<feature type="cross-link" description="Glycyl lysine isopeptide (Lys-Gly) (interchain with G-Cter in SUMO2)" evidence="2">
    <location>
        <position position="211"/>
    </location>
</feature>